<sequence>MDLTVDPNLHSLINSTTHRWIFVGGKGGVGKTTSSCSIAIQMALSQPSKQFLLISTDPAHNLSDAFGEKFGKDARKVTGMDNLSCMEIDPSAALNDMNDMAVSRANENGNGGDGLSDILQGGALADLTGSIPGIDEALSFMEVMKHIKNQENGEGDRYDTVIFDTAPTGHTLRFLQLPNTLSKLLEKFGEITGKLGPMLNSLAGAGNVDISGKLNELKENVEKIRQQFTDPDLTTFVCVCISEFLSLYETERLIQELISYDMDVNSIIVNQLLFAEYDAEHNCKRCQARWKMQKKYLDQIDELYEDFHVVKMPLCAGEIRGLNNLKKFSAFLNKEYDPVADGKVIYELEEKN</sequence>
<evidence type="ECO:0000255" key="1">
    <source>
        <dbReference type="HAMAP-Rule" id="MF_03112"/>
    </source>
</evidence>
<name>GET3_VANPO</name>
<keyword id="KW-0067">ATP-binding</keyword>
<keyword id="KW-0963">Cytoplasm</keyword>
<keyword id="KW-0256">Endoplasmic reticulum</keyword>
<keyword id="KW-0333">Golgi apparatus</keyword>
<keyword id="KW-0378">Hydrolase</keyword>
<keyword id="KW-0479">Metal-binding</keyword>
<keyword id="KW-0547">Nucleotide-binding</keyword>
<keyword id="KW-1185">Reference proteome</keyword>
<keyword id="KW-0813">Transport</keyword>
<keyword id="KW-0862">Zinc</keyword>
<gene>
    <name evidence="1" type="primary">GET3</name>
    <name type="ORF">Kpol_1032p81</name>
</gene>
<feature type="chain" id="PRO_0000388236" description="ATPase GET3">
    <location>
        <begin position="1"/>
        <end position="352"/>
    </location>
</feature>
<feature type="active site" evidence="1">
    <location>
        <position position="57"/>
    </location>
</feature>
<feature type="binding site" evidence="1">
    <location>
        <begin position="26"/>
        <end position="33"/>
    </location>
    <ligand>
        <name>ATP</name>
        <dbReference type="ChEBI" id="CHEBI:30616"/>
    </ligand>
</feature>
<feature type="binding site" evidence="1">
    <location>
        <position position="243"/>
    </location>
    <ligand>
        <name>ATP</name>
        <dbReference type="ChEBI" id="CHEBI:30616"/>
    </ligand>
</feature>
<feature type="binding site" evidence="1">
    <location>
        <position position="270"/>
    </location>
    <ligand>
        <name>ATP</name>
        <dbReference type="ChEBI" id="CHEBI:30616"/>
    </ligand>
</feature>
<feature type="binding site" evidence="1">
    <location>
        <position position="283"/>
    </location>
    <ligand>
        <name>Zn(2+)</name>
        <dbReference type="ChEBI" id="CHEBI:29105"/>
        <note>ligand shared between dimeric partners</note>
    </ligand>
</feature>
<feature type="binding site" evidence="1">
    <location>
        <position position="286"/>
    </location>
    <ligand>
        <name>Zn(2+)</name>
        <dbReference type="ChEBI" id="CHEBI:29105"/>
        <note>ligand shared between dimeric partners</note>
    </ligand>
</feature>
<comment type="function">
    <text evidence="1">ATPase required for the post-translational delivery of tail-anchored (TA) proteins to the endoplasmic reticulum. Recognizes and selectively binds the transmembrane domain of TA proteins in the cytosol. This complex then targets to the endoplasmic reticulum by membrane-bound receptors GET1 and GET2, where the tail-anchored protein is released for insertion. This process is regulated by ATP binding and hydrolysis. ATP binding drives the homodimer towards the closed dimer state, facilitating recognition of newly synthesized TA membrane proteins. ATP hydrolysis is required for insertion. Subsequently, the homodimer reverts towards the open dimer state, lowering its affinity for the GET1-GET2 receptor, and returning it to the cytosol to initiate a new round of targeting. Cooperates with the HDEL receptor ERD2 to mediate the ATP-dependent retrieval of resident ER proteins that contain a C-terminal H-D-E-L retention signal from the Golgi to the ER. Involved in low-level resistance to the oxyanions arsenite and arsenate, and in heat tolerance.</text>
</comment>
<comment type="subunit">
    <text evidence="1">Homodimer. Component of the Golgi to ER traffic (GET) complex, which is composed of GET1, GET2 and GET3. Within the complex, GET1 and GET2 form a heterotetramer which is stabilized by phosphatidylinositol binding and which binds to the GET3 homodimer. Interacts with the chloride channel protein GEF1.</text>
</comment>
<comment type="subcellular location">
    <subcellularLocation>
        <location evidence="1">Cytoplasm</location>
    </subcellularLocation>
    <subcellularLocation>
        <location evidence="1">Endoplasmic reticulum</location>
    </subcellularLocation>
    <subcellularLocation>
        <location evidence="1">Golgi apparatus</location>
    </subcellularLocation>
    <text evidence="1">GET1 and GET2 are required for targeting GET3 to the endoplasmic reticulum.</text>
</comment>
<comment type="similarity">
    <text evidence="1">Belongs to the arsA ATPase family.</text>
</comment>
<reference key="1">
    <citation type="journal article" date="2007" name="Proc. Natl. Acad. Sci. U.S.A.">
        <title>Independent sorting-out of thousands of duplicated gene pairs in two yeast species descended from a whole-genome duplication.</title>
        <authorList>
            <person name="Scannell D.R."/>
            <person name="Frank A.C."/>
            <person name="Conant G.C."/>
            <person name="Byrne K.P."/>
            <person name="Woolfit M."/>
            <person name="Wolfe K.H."/>
        </authorList>
    </citation>
    <scope>NUCLEOTIDE SEQUENCE [LARGE SCALE GENOMIC DNA]</scope>
    <source>
        <strain>ATCC 22028 / DSM 70294 / BCRC 21397 / CBS 2163 / NBRC 10782 / NRRL Y-8283 / UCD 57-17</strain>
    </source>
</reference>
<organism>
    <name type="scientific">Vanderwaltozyma polyspora (strain ATCC 22028 / DSM 70294 / BCRC 21397 / CBS 2163 / NBRC 10782 / NRRL Y-8283 / UCD 57-17)</name>
    <name type="common">Kluyveromyces polysporus</name>
    <dbReference type="NCBI Taxonomy" id="436907"/>
    <lineage>
        <taxon>Eukaryota</taxon>
        <taxon>Fungi</taxon>
        <taxon>Dikarya</taxon>
        <taxon>Ascomycota</taxon>
        <taxon>Saccharomycotina</taxon>
        <taxon>Saccharomycetes</taxon>
        <taxon>Saccharomycetales</taxon>
        <taxon>Saccharomycetaceae</taxon>
        <taxon>Vanderwaltozyma</taxon>
    </lineage>
</organism>
<dbReference type="EC" id="3.6.-.-" evidence="1"/>
<dbReference type="EMBL" id="DS480389">
    <property type="protein sequence ID" value="EDO18484.1"/>
    <property type="molecule type" value="Genomic_DNA"/>
</dbReference>
<dbReference type="RefSeq" id="XP_001646342.1">
    <property type="nucleotide sequence ID" value="XM_001646292.1"/>
</dbReference>
<dbReference type="SMR" id="A7TH32"/>
<dbReference type="FunCoup" id="A7TH32">
    <property type="interactions" value="1022"/>
</dbReference>
<dbReference type="STRING" id="436907.A7TH32"/>
<dbReference type="GeneID" id="5546771"/>
<dbReference type="KEGG" id="vpo:Kpol_1032p81"/>
<dbReference type="eggNOG" id="KOG2825">
    <property type="taxonomic scope" value="Eukaryota"/>
</dbReference>
<dbReference type="HOGENOM" id="CLU_040761_0_0_1"/>
<dbReference type="InParanoid" id="A7TH32"/>
<dbReference type="OMA" id="MDAPYEF"/>
<dbReference type="OrthoDB" id="1770at2759"/>
<dbReference type="PhylomeDB" id="A7TH32"/>
<dbReference type="Proteomes" id="UP000000267">
    <property type="component" value="Unassembled WGS sequence"/>
</dbReference>
<dbReference type="GO" id="GO:0043529">
    <property type="term" value="C:GET complex"/>
    <property type="evidence" value="ECO:0007669"/>
    <property type="project" value="EnsemblFungi"/>
</dbReference>
<dbReference type="GO" id="GO:0005794">
    <property type="term" value="C:Golgi apparatus"/>
    <property type="evidence" value="ECO:0007669"/>
    <property type="project" value="UniProtKB-SubCell"/>
</dbReference>
<dbReference type="GO" id="GO:0005524">
    <property type="term" value="F:ATP binding"/>
    <property type="evidence" value="ECO:0007669"/>
    <property type="project" value="UniProtKB-UniRule"/>
</dbReference>
<dbReference type="GO" id="GO:0016887">
    <property type="term" value="F:ATP hydrolysis activity"/>
    <property type="evidence" value="ECO:0007669"/>
    <property type="project" value="EnsemblFungi"/>
</dbReference>
<dbReference type="GO" id="GO:0005085">
    <property type="term" value="F:guanyl-nucleotide exchange factor activity"/>
    <property type="evidence" value="ECO:0007669"/>
    <property type="project" value="EnsemblFungi"/>
</dbReference>
<dbReference type="GO" id="GO:0042802">
    <property type="term" value="F:identical protein binding"/>
    <property type="evidence" value="ECO:0007669"/>
    <property type="project" value="EnsemblFungi"/>
</dbReference>
<dbReference type="GO" id="GO:0046872">
    <property type="term" value="F:metal ion binding"/>
    <property type="evidence" value="ECO:0007669"/>
    <property type="project" value="UniProtKB-KW"/>
</dbReference>
<dbReference type="GO" id="GO:0044183">
    <property type="term" value="F:protein folding chaperone"/>
    <property type="evidence" value="ECO:0007669"/>
    <property type="project" value="EnsemblFungi"/>
</dbReference>
<dbReference type="GO" id="GO:0051082">
    <property type="term" value="F:unfolded protein binding"/>
    <property type="evidence" value="ECO:0007669"/>
    <property type="project" value="EnsemblFungi"/>
</dbReference>
<dbReference type="GO" id="GO:0034599">
    <property type="term" value="P:cellular response to oxidative stress"/>
    <property type="evidence" value="ECO:0007669"/>
    <property type="project" value="EnsemblFungi"/>
</dbReference>
<dbReference type="GO" id="GO:0000750">
    <property type="term" value="P:pheromone-dependent signal transduction involved in conjugation with cellular fusion"/>
    <property type="evidence" value="ECO:0007669"/>
    <property type="project" value="EnsemblFungi"/>
</dbReference>
<dbReference type="GO" id="GO:0006620">
    <property type="term" value="P:post-translational protein targeting to endoplasmic reticulum membrane"/>
    <property type="evidence" value="ECO:0007669"/>
    <property type="project" value="EnsemblFungi"/>
</dbReference>
<dbReference type="GO" id="GO:0009408">
    <property type="term" value="P:response to heat"/>
    <property type="evidence" value="ECO:0007669"/>
    <property type="project" value="EnsemblFungi"/>
</dbReference>
<dbReference type="GO" id="GO:0010038">
    <property type="term" value="P:response to metal ion"/>
    <property type="evidence" value="ECO:0007669"/>
    <property type="project" value="EnsemblFungi"/>
</dbReference>
<dbReference type="GO" id="GO:0006890">
    <property type="term" value="P:retrograde vesicle-mediated transport, Golgi to endoplasmic reticulum"/>
    <property type="evidence" value="ECO:0007669"/>
    <property type="project" value="EnsemblFungi"/>
</dbReference>
<dbReference type="GO" id="GO:0071816">
    <property type="term" value="P:tail-anchored membrane protein insertion into ER membrane"/>
    <property type="evidence" value="ECO:0007669"/>
    <property type="project" value="EnsemblFungi"/>
</dbReference>
<dbReference type="CDD" id="cd02035">
    <property type="entry name" value="ArsA"/>
    <property type="match status" value="1"/>
</dbReference>
<dbReference type="FunFam" id="3.40.50.300:FF:001359">
    <property type="entry name" value="ATPase GET3"/>
    <property type="match status" value="1"/>
</dbReference>
<dbReference type="Gene3D" id="3.40.50.300">
    <property type="entry name" value="P-loop containing nucleotide triphosphate hydrolases"/>
    <property type="match status" value="1"/>
</dbReference>
<dbReference type="HAMAP" id="MF_03112">
    <property type="entry name" value="Asna1_Get3"/>
    <property type="match status" value="1"/>
</dbReference>
<dbReference type="InterPro" id="IPR025723">
    <property type="entry name" value="Anion-transp_ATPase-like_dom"/>
</dbReference>
<dbReference type="InterPro" id="IPR016300">
    <property type="entry name" value="ATPase_ArsA/GET3"/>
</dbReference>
<dbReference type="InterPro" id="IPR027542">
    <property type="entry name" value="ATPase_ArsA/GET3_euk"/>
</dbReference>
<dbReference type="InterPro" id="IPR027417">
    <property type="entry name" value="P-loop_NTPase"/>
</dbReference>
<dbReference type="NCBIfam" id="TIGR00345">
    <property type="entry name" value="GET3_arsA_TRC40"/>
    <property type="match status" value="1"/>
</dbReference>
<dbReference type="PANTHER" id="PTHR10803">
    <property type="entry name" value="ARSENICAL PUMP-DRIVING ATPASE ARSENITE-TRANSLOCATING ATPASE"/>
    <property type="match status" value="1"/>
</dbReference>
<dbReference type="PANTHER" id="PTHR10803:SF3">
    <property type="entry name" value="ATPASE GET3"/>
    <property type="match status" value="1"/>
</dbReference>
<dbReference type="Pfam" id="PF02374">
    <property type="entry name" value="ArsA_ATPase"/>
    <property type="match status" value="1"/>
</dbReference>
<dbReference type="SUPFAM" id="SSF52540">
    <property type="entry name" value="P-loop containing nucleoside triphosphate hydrolases"/>
    <property type="match status" value="1"/>
</dbReference>
<protein>
    <recommendedName>
        <fullName evidence="1">ATPase GET3</fullName>
        <ecNumber evidence="1">3.6.-.-</ecNumber>
    </recommendedName>
    <alternativeName>
        <fullName evidence="1">Arsenical pump-driving ATPase</fullName>
    </alternativeName>
    <alternativeName>
        <fullName evidence="1">Arsenite-stimulated ATPase</fullName>
    </alternativeName>
    <alternativeName>
        <fullName evidence="1">Golgi to ER traffic protein 3</fullName>
    </alternativeName>
    <alternativeName>
        <fullName evidence="1">Guided entry of tail-anchored proteins 3</fullName>
    </alternativeName>
</protein>
<accession>A7TH32</accession>
<proteinExistence type="inferred from homology"/>